<comment type="function">
    <text evidence="3 4 5 6 8 9">Bifunctional effector protein that is secreted and delivered by the type III secretion system into eukaryotic target cells. ADP-ribosylates several eukaryotic proteins including CT10 regulator of kinase (Crk) proteins (PubMed:12807879). In turn, induces atypical anoikis apoptosis by transforming Crk adaptor protein into a cytotoxin (PubMed:26020630). Affects host cell morphology by disrupting the actin cytoskeleton (PubMed:14688136). In addition to this activity, acts via its N-terminal region as a GTPase-activating protein (GAP) for host Rho GTPases including RhoA, Rac1, Cdc42 and Ras (PubMed:11895987). The bacterial Rho-GAP domain activity induces mitochondrial disruption in the target host cell by activating host caspases 3 and 9 that execute cellular death (PubMed:26451042). This activity also causes stress fiber disassembly (PubMed:11895987).</text>
</comment>
<comment type="catalytic activity">
    <reaction evidence="3 5">
        <text>L-arginyl-[protein] + NAD(+) = N(omega)-(ADP-D-ribosyl)-L-arginyl-[protein] + nicotinamide + H(+)</text>
        <dbReference type="Rhea" id="RHEA:19149"/>
        <dbReference type="Rhea" id="RHEA-COMP:10532"/>
        <dbReference type="Rhea" id="RHEA-COMP:15087"/>
        <dbReference type="ChEBI" id="CHEBI:15378"/>
        <dbReference type="ChEBI" id="CHEBI:17154"/>
        <dbReference type="ChEBI" id="CHEBI:29965"/>
        <dbReference type="ChEBI" id="CHEBI:57540"/>
        <dbReference type="ChEBI" id="CHEBI:142554"/>
        <dbReference type="EC" id="2.4.2.31"/>
    </reaction>
</comment>
<comment type="subunit">
    <text evidence="7 10">Interacts with chaperone protein SpcS; this interaction maintains ExoT in a secretion competent state within the cytoplasm (PubMed:24387107). Interacts with host YWHAB (PubMed:30224724).</text>
</comment>
<comment type="subcellular location">
    <subcellularLocation>
        <location evidence="7">Secreted</location>
    </subcellularLocation>
    <text evidence="12">Secreted via type III secretion system (T3SS) and delivered into the host cytoplasm.</text>
</comment>
<comment type="induction">
    <text evidence="11">By host YWHAB.</text>
</comment>
<feature type="chain" id="PRO_0000451080" description="Exoenzyme T">
    <location>
        <begin position="1"/>
        <end position="457"/>
    </location>
</feature>
<feature type="domain" description="Bacterial Rho-GAP" evidence="2">
    <location>
        <begin position="99"/>
        <end position="232"/>
    </location>
</feature>
<feature type="domain" description="TR mART core" evidence="1">
    <location>
        <begin position="242"/>
        <end position="418"/>
    </location>
</feature>
<feature type="active site" evidence="1">
    <location>
        <position position="322"/>
    </location>
</feature>
<feature type="active site" evidence="1">
    <location>
        <position position="346"/>
    </location>
</feature>
<feature type="active site" evidence="1">
    <location>
        <position position="385"/>
    </location>
</feature>
<feature type="site" description="Arginine finger; crucial for GTP hydrolysis by stabilizing the transition state" evidence="2">
    <location>
        <position position="149"/>
    </location>
</feature>
<feature type="mutagenesis site" description="Loss of GAP activity." evidence="3 4 5">
    <original>R</original>
    <variation>K</variation>
    <location>
        <position position="149"/>
    </location>
</feature>
<feature type="mutagenesis site" description="Loss of ADP-ribosyltransferase activity; when associated with D-385." evidence="5 6">
    <original>E</original>
    <variation>D</variation>
    <location>
        <position position="383"/>
    </location>
</feature>
<feature type="mutagenesis site" description="Loss of ADP-ribosyltransferase activity; when associated with D-383." evidence="5 6">
    <original>E</original>
    <variation>D</variation>
    <location>
        <position position="385"/>
    </location>
</feature>
<feature type="strand" evidence="16">
    <location>
        <begin position="29"/>
        <end position="32"/>
    </location>
</feature>
<feature type="helix" evidence="16">
    <location>
        <begin position="36"/>
        <end position="41"/>
    </location>
</feature>
<feature type="helix" evidence="16">
    <location>
        <begin position="53"/>
        <end position="57"/>
    </location>
</feature>
<feature type="strand" evidence="16">
    <location>
        <begin position="59"/>
        <end position="61"/>
    </location>
</feature>
<feature type="helix" evidence="16">
    <location>
        <begin position="66"/>
        <end position="76"/>
    </location>
</feature>
<dbReference type="EC" id="2.4.2.31" evidence="3 5"/>
<dbReference type="EMBL" id="AE004091">
    <property type="protein sequence ID" value="AAG03434.1"/>
    <property type="molecule type" value="Genomic_DNA"/>
</dbReference>
<dbReference type="PIR" id="G83639">
    <property type="entry name" value="G83639"/>
</dbReference>
<dbReference type="RefSeq" id="NP_248734.1">
    <property type="nucleotide sequence ID" value="NC_002516.2"/>
</dbReference>
<dbReference type="RefSeq" id="WP_003114583.1">
    <property type="nucleotide sequence ID" value="NC_002516.2"/>
</dbReference>
<dbReference type="PDB" id="4JMF">
    <property type="method" value="X-ray"/>
    <property type="resolution" value="2.10 A"/>
    <property type="chains" value="A=28-77"/>
</dbReference>
<dbReference type="PDB" id="6GNN">
    <property type="method" value="X-ray"/>
    <property type="resolution" value="3.79 A"/>
    <property type="chains" value="C=235-457"/>
</dbReference>
<dbReference type="PDB" id="6JNP">
    <property type="method" value="X-ray"/>
    <property type="resolution" value="2.26 A"/>
    <property type="chains" value="A/D=23-79"/>
</dbReference>
<dbReference type="PDBsum" id="4JMF"/>
<dbReference type="PDBsum" id="6GNN"/>
<dbReference type="PDBsum" id="6JNP"/>
<dbReference type="SMR" id="Q9I788"/>
<dbReference type="STRING" id="208964.PA0044"/>
<dbReference type="TCDB" id="1.C.106.4.2">
    <property type="family name" value="the bacillus thuringiensis vegetative insecticidal protein-2 (vip2) family"/>
</dbReference>
<dbReference type="PaxDb" id="208964-PA0044"/>
<dbReference type="DNASU" id="878350"/>
<dbReference type="GeneID" id="878350"/>
<dbReference type="KEGG" id="pae:PA0044"/>
<dbReference type="PATRIC" id="fig|208964.12.peg.45"/>
<dbReference type="PseudoCAP" id="PA0044"/>
<dbReference type="HOGENOM" id="CLU_603900_0_0_6"/>
<dbReference type="InParanoid" id="Q9I788"/>
<dbReference type="OrthoDB" id="5918307at2"/>
<dbReference type="BioCyc" id="PAER208964:G1FZ6-46-MONOMER"/>
<dbReference type="PHI-base" id="PHI:11504"/>
<dbReference type="PHI-base" id="PHI:12237"/>
<dbReference type="Proteomes" id="UP000002438">
    <property type="component" value="Chromosome"/>
</dbReference>
<dbReference type="GO" id="GO:0005576">
    <property type="term" value="C:extracellular region"/>
    <property type="evidence" value="ECO:0007669"/>
    <property type="project" value="UniProtKB-SubCell"/>
</dbReference>
<dbReference type="GO" id="GO:0005096">
    <property type="term" value="F:GTPase activator activity"/>
    <property type="evidence" value="ECO:0007669"/>
    <property type="project" value="InterPro"/>
</dbReference>
<dbReference type="GO" id="GO:0106274">
    <property type="term" value="F:NAD+-protein-arginine ADP-ribosyltransferase activity"/>
    <property type="evidence" value="ECO:0007669"/>
    <property type="project" value="UniProtKB-EC"/>
</dbReference>
<dbReference type="GO" id="GO:0016779">
    <property type="term" value="F:nucleotidyltransferase activity"/>
    <property type="evidence" value="ECO:0007669"/>
    <property type="project" value="UniProtKB-KW"/>
</dbReference>
<dbReference type="GO" id="GO:0090729">
    <property type="term" value="F:toxin activity"/>
    <property type="evidence" value="ECO:0007669"/>
    <property type="project" value="UniProtKB-KW"/>
</dbReference>
<dbReference type="GO" id="GO:0141029">
    <property type="term" value="P:symbiont-mediated disruption of host focal adhesion"/>
    <property type="evidence" value="ECO:0000269"/>
    <property type="project" value="SigSci"/>
</dbReference>
<dbReference type="CDD" id="cd00219">
    <property type="entry name" value="ToxGAP"/>
    <property type="match status" value="1"/>
</dbReference>
<dbReference type="Gene3D" id="6.10.250.2690">
    <property type="match status" value="1"/>
</dbReference>
<dbReference type="Gene3D" id="3.90.176.10">
    <property type="entry name" value="Toxin ADP-ribosyltransferase, Chain A, domain 1"/>
    <property type="match status" value="1"/>
</dbReference>
<dbReference type="Gene3D" id="1.20.120.260">
    <property type="entry name" value="Virulence factor YopE uncharacterised domain"/>
    <property type="match status" value="1"/>
</dbReference>
<dbReference type="InterPro" id="IPR003540">
    <property type="entry name" value="ADP-ribosyltransferase"/>
</dbReference>
<dbReference type="InterPro" id="IPR050999">
    <property type="entry name" value="ADP-ribosyltransferase_ARG"/>
</dbReference>
<dbReference type="InterPro" id="IPR003537">
    <property type="entry name" value="YopE-like"/>
</dbReference>
<dbReference type="InterPro" id="IPR014773">
    <property type="entry name" value="YopE_GAP_dom"/>
</dbReference>
<dbReference type="InterPro" id="IPR037168">
    <property type="entry name" value="YopE_GAP_dom_sf"/>
</dbReference>
<dbReference type="PANTHER" id="PTHR10339">
    <property type="entry name" value="ADP-RIBOSYLTRANSFERASE"/>
    <property type="match status" value="1"/>
</dbReference>
<dbReference type="PANTHER" id="PTHR10339:SF25">
    <property type="entry name" value="SECRETED EXOENZYME S"/>
    <property type="match status" value="1"/>
</dbReference>
<dbReference type="Pfam" id="PF03496">
    <property type="entry name" value="ADPrib_exo_Tox"/>
    <property type="match status" value="1"/>
</dbReference>
<dbReference type="Pfam" id="PF03545">
    <property type="entry name" value="YopE"/>
    <property type="match status" value="1"/>
</dbReference>
<dbReference type="PRINTS" id="PR01372">
    <property type="entry name" value="YERSINIAYOPE"/>
</dbReference>
<dbReference type="SUPFAM" id="SSF56399">
    <property type="entry name" value="ADP-ribosylation"/>
    <property type="match status" value="1"/>
</dbReference>
<dbReference type="SUPFAM" id="SSF47233">
    <property type="entry name" value="Bacterial GAP domain"/>
    <property type="match status" value="1"/>
</dbReference>
<dbReference type="PROSITE" id="PS52059">
    <property type="entry name" value="BACT_RHOGAP"/>
    <property type="match status" value="1"/>
</dbReference>
<dbReference type="PROSITE" id="PS51996">
    <property type="entry name" value="TR_MART"/>
    <property type="match status" value="1"/>
</dbReference>
<sequence>MHIQSSQQNPSFVAELSQAVAGRLGQVEARQVATPREAQQLAQRQEAPKGEGLLSRLGAALARPFVAIIEWLGKLLGSRAHAATQAPLSRQDAPPAASLSAAEIKQMMLQKALPLTLGGLGKASELATLTAERLAKDHTRLASGDGALRSLATALVGIRDGSRIEASRTQAARLLEQSVGGIALQQWGTAGGAASQHVLSASPEQLREIAVQLHAVMDKVALLRHAVESEVKGEPVDKALADGLVEHFGLEAEQYLGEHPDGPYSDAEVMALGLYTNGEYQHLNRSLRQGRELDAGQALIDRGMSAAFEKSGPAEQVVKTFRGTQGRDAFEAVKEGQVGHDAGYLSTSRDPGVARSFAGQGTITTLFGRSGIDVSEISIEGDEQEILYDKGTDMRVLLSAKDGQGVTRRVLEEATLGERSGHGEGLLDALDLATGTDRSGKPQEQDLRLRMRGLDLA</sequence>
<keyword id="KW-0002">3D-structure</keyword>
<keyword id="KW-0328">Glycosyltransferase</keyword>
<keyword id="KW-0343">GTPase activation</keyword>
<keyword id="KW-0548">Nucleotidyltransferase</keyword>
<keyword id="KW-1185">Reference proteome</keyword>
<keyword id="KW-0964">Secreted</keyword>
<keyword id="KW-0800">Toxin</keyword>
<keyword id="KW-0808">Transferase</keyword>
<keyword id="KW-0843">Virulence</keyword>
<reference key="1">
    <citation type="journal article" date="2000" name="Nature">
        <title>Complete genome sequence of Pseudomonas aeruginosa PAO1, an opportunistic pathogen.</title>
        <authorList>
            <person name="Stover C.K."/>
            <person name="Pham X.-Q.T."/>
            <person name="Erwin A.L."/>
            <person name="Mizoguchi S.D."/>
            <person name="Warrener P."/>
            <person name="Hickey M.J."/>
            <person name="Brinkman F.S.L."/>
            <person name="Hufnagle W.O."/>
            <person name="Kowalik D.J."/>
            <person name="Lagrou M."/>
            <person name="Garber R.L."/>
            <person name="Goltry L."/>
            <person name="Tolentino E."/>
            <person name="Westbrock-Wadman S."/>
            <person name="Yuan Y."/>
            <person name="Brody L.L."/>
            <person name="Coulter S.N."/>
            <person name="Folger K.R."/>
            <person name="Kas A."/>
            <person name="Larbig K."/>
            <person name="Lim R.M."/>
            <person name="Smith K.A."/>
            <person name="Spencer D.H."/>
            <person name="Wong G.K.-S."/>
            <person name="Wu Z."/>
            <person name="Paulsen I.T."/>
            <person name="Reizer J."/>
            <person name="Saier M.H. Jr."/>
            <person name="Hancock R.E.W."/>
            <person name="Lory S."/>
            <person name="Olson M.V."/>
        </authorList>
    </citation>
    <scope>NUCLEOTIDE SEQUENCE [LARGE SCALE GENOMIC DNA]</scope>
    <source>
        <strain>ATCC 15692 / DSM 22644 / CIP 104116 / JCM 14847 / LMG 12228 / 1C / PRS 101 / PAO1</strain>
    </source>
</reference>
<reference key="2">
    <citation type="journal article" date="2001" name="Cell. Microbiol.">
        <title>Exoenzyme T of Pseudomonas aeruginosa elicits cytotoxicity without interfering with Ras signal transduction.</title>
        <authorList>
            <person name="Sundin C."/>
            <person name="Henriksson M.L."/>
            <person name="Hallberg B."/>
            <person name="Forsberg A."/>
            <person name="Frithz-Lindsten E."/>
        </authorList>
    </citation>
    <scope>FUNCTION</scope>
    <scope>MUTAGENESIS OF ARG-149</scope>
    <scope>CATALYTIC ACTIVITY</scope>
    <source>
        <strain>388</strain>
    </source>
</reference>
<reference key="3">
    <citation type="journal article" date="2002" name="Infect. Immun.">
        <title>Pseudomonas aeruginosa ExoT acts in vivo as a GTPase-activating protein for RhoA, Rac1, and Cdc42.</title>
        <authorList>
            <person name="Kazmierczak B.I."/>
            <person name="Engel J.N."/>
        </authorList>
    </citation>
    <scope>FUNCTION</scope>
    <scope>MUTAGENESIS OF ARG-149</scope>
    <source>
        <strain>PA103</strain>
    </source>
</reference>
<reference key="4">
    <citation type="journal article" date="2003" name="J. Biol. Chem.">
        <title>Pseudomonas aeruginosa ExoT ADP-ribosylates CT10 regulator of kinase (Crk) proteins.</title>
        <authorList>
            <person name="Sun J."/>
            <person name="Barbieri J.T."/>
        </authorList>
    </citation>
    <scope>FUNCTION</scope>
    <scope>CATALYTIC ACTIVITY</scope>
    <scope>MUTAGENESIS OF ARG-149; GLU-383 AND GLU-385</scope>
    <source>
        <strain>PA103</strain>
    </source>
</reference>
<reference key="5">
    <citation type="journal article" date="2004" name="Infect. Immun.">
        <title>The ADP ribosyltransferase domain of Pseudomonas aeruginosa ExoT contributes to its biological activities.</title>
        <authorList>
            <person name="Garrity-Ryan L."/>
            <person name="Shafikhani S."/>
            <person name="Balachandran P."/>
            <person name="Nguyen L."/>
            <person name="Oza J."/>
            <person name="Jakobsen T."/>
            <person name="Sargent J."/>
            <person name="Fang X."/>
            <person name="Cordwell S."/>
            <person name="Matthay M.A."/>
            <person name="Engel J.N."/>
        </authorList>
    </citation>
    <scope>FUNCTION</scope>
    <scope>MUTAGENESIS OF GLU-383 AND GLU-385</scope>
    <source>
        <strain>PA103</strain>
    </source>
</reference>
<reference key="6">
    <citation type="journal article" date="2015" name="J. Biol. Chem.">
        <title>Pseudomonas aeruginosa ExoT Induces Mitochondrial Apoptosis in Target Host Cells in a Manner That Depends on Its GTPase-activating Protein (GAP) Domain Activity.</title>
        <authorList>
            <person name="Wood S.J."/>
            <person name="Goldufsky J.W."/>
            <person name="Bello D."/>
            <person name="Masood S."/>
            <person name="Shafikhani S.H."/>
        </authorList>
    </citation>
    <scope>FUNCTION</scope>
    <source>
        <strain>PA103</strain>
    </source>
</reference>
<reference key="7">
    <citation type="journal article" date="2015" name="PLoS Pathog.">
        <title>Pseudomonas aeruginosa ExoT Induces Atypical Anoikis Apoptosis in Target Host Cells by Transforming Crk Adaptor Protein into a Cytotoxin.</title>
        <authorList>
            <person name="Wood S."/>
            <person name="Goldufsky J."/>
            <person name="Shafikhani S.H."/>
        </authorList>
    </citation>
    <scope>FUNCTION</scope>
    <source>
        <strain>PA103</strain>
    </source>
</reference>
<reference evidence="13" key="8">
    <citation type="journal article" date="2014" name="FEBS J.">
        <title>Interfacial residues of SpcS chaperone affects binding of effector toxin ExoT in Pseudomonas aeruginosa: novel insights from structural and computational studies.</title>
        <authorList>
            <person name="Dey S."/>
            <person name="Datta S."/>
        </authorList>
    </citation>
    <scope>X-RAY CRYSTALLOGRAPHY (2.10 ANGSTROMS) OF 28-77</scope>
    <scope>INTERACTION WITH SPCS</scope>
    <scope>SUBCELLULAR LOCATION</scope>
</reference>
<reference evidence="14" key="9">
    <citation type="journal article" date="2018" name="Nat. Commun.">
        <title>14-3-3 proteins activate Pseudomonas exotoxins-S and -T by chaperoning a hydrophobic surface.</title>
        <authorList>
            <person name="Karlberg T."/>
            <person name="Hornyak P."/>
            <person name="Pinto A.F."/>
            <person name="Milanova S."/>
            <person name="Ebrahimi M."/>
            <person name="Lindberg M."/>
            <person name="Pullen N."/>
            <person name="Nordstrom A."/>
            <person name="Loverli E."/>
            <person name="Caraballo R."/>
            <person name="Wong E.V."/>
            <person name="Nareoja K."/>
            <person name="Thorsell A.G."/>
            <person name="Elofsson M."/>
            <person name="De La Cruz E.M."/>
            <person name="Bjorkegren C."/>
            <person name="Schuler H."/>
        </authorList>
    </citation>
    <scope>X-RAY CRYSTALLOGRAPHY (3.79 ANGSTROMS) OF 235-457</scope>
    <scope>INDUCTION BY HOST YWHAB</scope>
    <scope>INTERACTION WITH HOST YWHAB</scope>
</reference>
<reference evidence="15" key="10">
    <citation type="submission" date="2019-03" db="PDB data bank">
        <title>Structure of ExoT-SpcS Complex from Pseudomonas aeruginosa.</title>
        <authorList>
            <person name="Datta S."/>
            <person name="Mondal A."/>
        </authorList>
    </citation>
    <scope>X-RAY CRYSTALLOGRAPHY (2.26 ANGSTROMS) OF 23-79</scope>
</reference>
<protein>
    <recommendedName>
        <fullName>Exoenzyme T</fullName>
    </recommendedName>
    <domain>
        <recommendedName>
            <fullName>GTPase-activating protein</fullName>
            <shortName>GAP</shortName>
        </recommendedName>
    </domain>
    <domain>
        <recommendedName>
            <fullName>ADP-ribosyltransferase</fullName>
            <shortName>ADPRT</shortName>
            <ecNumber evidence="3 5">2.4.2.31</ecNumber>
        </recommendedName>
    </domain>
</protein>
<organism>
    <name type="scientific">Pseudomonas aeruginosa (strain ATCC 15692 / DSM 22644 / CIP 104116 / JCM 14847 / LMG 12228 / 1C / PRS 101 / PAO1)</name>
    <dbReference type="NCBI Taxonomy" id="208964"/>
    <lineage>
        <taxon>Bacteria</taxon>
        <taxon>Pseudomonadati</taxon>
        <taxon>Pseudomonadota</taxon>
        <taxon>Gammaproteobacteria</taxon>
        <taxon>Pseudomonadales</taxon>
        <taxon>Pseudomonadaceae</taxon>
        <taxon>Pseudomonas</taxon>
    </lineage>
</organism>
<proteinExistence type="evidence at protein level"/>
<name>EXOT_PSEAE</name>
<evidence type="ECO:0000255" key="1">
    <source>
        <dbReference type="PROSITE-ProRule" id="PRU01340"/>
    </source>
</evidence>
<evidence type="ECO:0000255" key="2">
    <source>
        <dbReference type="PROSITE-ProRule" id="PRU01404"/>
    </source>
</evidence>
<evidence type="ECO:0000269" key="3">
    <source>
    </source>
</evidence>
<evidence type="ECO:0000269" key="4">
    <source>
    </source>
</evidence>
<evidence type="ECO:0000269" key="5">
    <source>
    </source>
</evidence>
<evidence type="ECO:0000269" key="6">
    <source>
    </source>
</evidence>
<evidence type="ECO:0000269" key="7">
    <source>
    </source>
</evidence>
<evidence type="ECO:0000269" key="8">
    <source>
    </source>
</evidence>
<evidence type="ECO:0000269" key="9">
    <source>
    </source>
</evidence>
<evidence type="ECO:0000269" key="10">
    <source>
    </source>
</evidence>
<evidence type="ECO:0000269" key="11">
    <source ref="10"/>
</evidence>
<evidence type="ECO:0000305" key="12"/>
<evidence type="ECO:0007744" key="13">
    <source>
        <dbReference type="PDB" id="4JMF"/>
    </source>
</evidence>
<evidence type="ECO:0007744" key="14">
    <source>
        <dbReference type="PDB" id="6GNN"/>
    </source>
</evidence>
<evidence type="ECO:0007744" key="15">
    <source>
        <dbReference type="PDB" id="6JNP"/>
    </source>
</evidence>
<evidence type="ECO:0007829" key="16">
    <source>
        <dbReference type="PDB" id="4JMF"/>
    </source>
</evidence>
<accession>Q9I788</accession>
<gene>
    <name type="primary">exoT</name>
    <name type="ordered locus">PA0044</name>
</gene>